<proteinExistence type="evidence at transcript level"/>
<gene>
    <name type="primary">Nap1l3</name>
</gene>
<sequence length="536" mass="60891">MAEADPKMVTEPAAQGVAEEAMASSACDSGDESDSNSSSSTTSCGSTGSSSSSSSSSSSSSSSSSGSSGSSSNGSHLHQKKRVPGPSRRAQRRPSGKLFMDKLPQAVRNRVQALRNIQNECDKVDTLFLRAIHDLERKYAELNKPLYDKRFQIINAEYEPTEEECEWNSEEEFSGDEEMQDDTPNEMPPLEGEEEEEIGKENTEVKEEVKDVPEEVPEAKVEEEEAPKETSEVKTEEKEIPKEGPEEKAEEQESSKEFPEVKVEEKTDSTDCIDIAPEEKEDLKDVTQANAEYTDQPTEDSTPRAPVREAQKRVPETRPEERVNIKRARKGKPKKEDPPRGIPDYWLTVLKNVDKLGPMIQKCDEPILKFLSDVSLKFSNPGQPISYTFEFHFLPNPYFRNELLMKTYIIRSKPDHYDPFFAWGWEIEECKGCKIDWRRGKDVTVTTRSRPAITGEIEVQPRVVPNASFFNFFSPPEIPLIGKLEPKEDAILDEDFEIGQILHDNVILKSIYYFTGEINDPYYHDFRDYGNRKYYK</sequence>
<feature type="chain" id="PRO_0000236212" description="Nucleosome assembly protein 1-like 3">
    <location>
        <begin position="1"/>
        <end position="536"/>
    </location>
</feature>
<feature type="region of interest" description="Disordered" evidence="2">
    <location>
        <begin position="1"/>
        <end position="104"/>
    </location>
</feature>
<feature type="region of interest" description="Disordered" evidence="2">
    <location>
        <begin position="160"/>
        <end position="338"/>
    </location>
</feature>
<feature type="compositionally biased region" description="Low complexity" evidence="2">
    <location>
        <begin position="35"/>
        <end position="75"/>
    </location>
</feature>
<feature type="compositionally biased region" description="Basic residues" evidence="2">
    <location>
        <begin position="77"/>
        <end position="95"/>
    </location>
</feature>
<feature type="compositionally biased region" description="Acidic residues" evidence="2">
    <location>
        <begin position="160"/>
        <end position="184"/>
    </location>
</feature>
<feature type="compositionally biased region" description="Basic and acidic residues" evidence="2">
    <location>
        <begin position="199"/>
        <end position="220"/>
    </location>
</feature>
<feature type="compositionally biased region" description="Basic and acidic residues" evidence="2">
    <location>
        <begin position="227"/>
        <end position="269"/>
    </location>
</feature>
<feature type="compositionally biased region" description="Polar residues" evidence="2">
    <location>
        <begin position="287"/>
        <end position="300"/>
    </location>
</feature>
<feature type="compositionally biased region" description="Basic and acidic residues" evidence="2">
    <location>
        <begin position="306"/>
        <end position="324"/>
    </location>
</feature>
<accession>Q924R9</accession>
<dbReference type="EMBL" id="AB067678">
    <property type="protein sequence ID" value="BAB62331.1"/>
    <property type="molecule type" value="mRNA"/>
</dbReference>
<dbReference type="EMBL" id="BC101932">
    <property type="protein sequence ID" value="AAI01933.1"/>
    <property type="molecule type" value="mRNA"/>
</dbReference>
<dbReference type="RefSeq" id="NP_596893.1">
    <property type="nucleotide sequence ID" value="NM_133402.2"/>
</dbReference>
<dbReference type="SMR" id="Q924R9"/>
<dbReference type="FunCoup" id="Q924R9">
    <property type="interactions" value="546"/>
</dbReference>
<dbReference type="STRING" id="10116.ENSRNOP00000048930"/>
<dbReference type="PhosphoSitePlus" id="Q924R9"/>
<dbReference type="PaxDb" id="10116-ENSRNOP00000048930"/>
<dbReference type="Ensembl" id="ENSRNOT00000049956.4">
    <property type="protein sequence ID" value="ENSRNOP00000048930.3"/>
    <property type="gene ID" value="ENSRNOG00000029087.4"/>
</dbReference>
<dbReference type="GeneID" id="170914"/>
<dbReference type="KEGG" id="rno:170914"/>
<dbReference type="UCSC" id="RGD:620990">
    <property type="organism name" value="rat"/>
</dbReference>
<dbReference type="AGR" id="RGD:620990"/>
<dbReference type="CTD" id="4675"/>
<dbReference type="RGD" id="620990">
    <property type="gene designation" value="Nap1l3"/>
</dbReference>
<dbReference type="eggNOG" id="KOG1507">
    <property type="taxonomic scope" value="Eukaryota"/>
</dbReference>
<dbReference type="GeneTree" id="ENSGT00940000162927"/>
<dbReference type="HOGENOM" id="CLU_038841_0_0_1"/>
<dbReference type="InParanoid" id="Q924R9"/>
<dbReference type="OMA" id="GKDYGNR"/>
<dbReference type="OrthoDB" id="27325at2759"/>
<dbReference type="PhylomeDB" id="Q924R9"/>
<dbReference type="TreeFam" id="TF314349"/>
<dbReference type="PRO" id="PR:Q924R9"/>
<dbReference type="Proteomes" id="UP000002494">
    <property type="component" value="Chromosome X"/>
</dbReference>
<dbReference type="Bgee" id="ENSRNOG00000029087">
    <property type="expression patterns" value="Expressed in Ammon's horn and 20 other cell types or tissues"/>
</dbReference>
<dbReference type="GO" id="GO:0000785">
    <property type="term" value="C:chromatin"/>
    <property type="evidence" value="ECO:0000318"/>
    <property type="project" value="GO_Central"/>
</dbReference>
<dbReference type="GO" id="GO:0005634">
    <property type="term" value="C:nucleus"/>
    <property type="evidence" value="ECO:0000318"/>
    <property type="project" value="GO_Central"/>
</dbReference>
<dbReference type="GO" id="GO:0003682">
    <property type="term" value="F:chromatin binding"/>
    <property type="evidence" value="ECO:0000318"/>
    <property type="project" value="GO_Central"/>
</dbReference>
<dbReference type="GO" id="GO:0042393">
    <property type="term" value="F:histone binding"/>
    <property type="evidence" value="ECO:0000318"/>
    <property type="project" value="GO_Central"/>
</dbReference>
<dbReference type="GO" id="GO:0006334">
    <property type="term" value="P:nucleosome assembly"/>
    <property type="evidence" value="ECO:0000318"/>
    <property type="project" value="GO_Central"/>
</dbReference>
<dbReference type="FunFam" id="1.20.5.1500:FF:000001">
    <property type="entry name" value="Nucleosome assembly protein 1-like 1"/>
    <property type="match status" value="1"/>
</dbReference>
<dbReference type="Gene3D" id="1.20.5.1500">
    <property type="match status" value="1"/>
</dbReference>
<dbReference type="Gene3D" id="3.30.1120.90">
    <property type="entry name" value="Nucleosome assembly protein"/>
    <property type="match status" value="1"/>
</dbReference>
<dbReference type="InterPro" id="IPR037231">
    <property type="entry name" value="NAP-like_sf"/>
</dbReference>
<dbReference type="InterPro" id="IPR002164">
    <property type="entry name" value="NAP_family"/>
</dbReference>
<dbReference type="PANTHER" id="PTHR11875">
    <property type="entry name" value="TESTIS-SPECIFIC Y-ENCODED PROTEIN"/>
    <property type="match status" value="1"/>
</dbReference>
<dbReference type="Pfam" id="PF00956">
    <property type="entry name" value="NAP"/>
    <property type="match status" value="1"/>
</dbReference>
<dbReference type="SUPFAM" id="SSF143113">
    <property type="entry name" value="NAP-like"/>
    <property type="match status" value="1"/>
</dbReference>
<reference key="1">
    <citation type="submission" date="2001-07" db="EMBL/GenBank/DDBJ databases">
        <title>Cloning of cDNA encoding a rat nucleosome assembly protein 1-like 3.</title>
        <authorList>
            <person name="Tsuchiya N."/>
            <person name="Fukuda H."/>
            <person name="Takagi S."/>
            <person name="Sugimura T."/>
            <person name="Nagao M."/>
            <person name="Nakagama H."/>
        </authorList>
    </citation>
    <scope>NUCLEOTIDE SEQUENCE [MRNA]</scope>
</reference>
<reference key="2">
    <citation type="journal article" date="2004" name="Genome Res.">
        <title>The status, quality, and expansion of the NIH full-length cDNA project: the Mammalian Gene Collection (MGC).</title>
        <authorList>
            <consortium name="The MGC Project Team"/>
        </authorList>
    </citation>
    <scope>NUCLEOTIDE SEQUENCE [LARGE SCALE MRNA]</scope>
    <source>
        <tissue>Prostate</tissue>
    </source>
</reference>
<evidence type="ECO:0000250" key="1"/>
<evidence type="ECO:0000256" key="2">
    <source>
        <dbReference type="SAM" id="MobiDB-lite"/>
    </source>
</evidence>
<evidence type="ECO:0000305" key="3"/>
<keyword id="KW-0539">Nucleus</keyword>
<keyword id="KW-1185">Reference proteome</keyword>
<comment type="subcellular location">
    <subcellularLocation>
        <location evidence="1">Nucleus</location>
    </subcellularLocation>
</comment>
<comment type="similarity">
    <text evidence="3">Belongs to the nucleosome assembly protein (NAP) family.</text>
</comment>
<name>NP1L3_RAT</name>
<protein>
    <recommendedName>
        <fullName>Nucleosome assembly protein 1-like 3</fullName>
    </recommendedName>
</protein>
<organism>
    <name type="scientific">Rattus norvegicus</name>
    <name type="common">Rat</name>
    <dbReference type="NCBI Taxonomy" id="10116"/>
    <lineage>
        <taxon>Eukaryota</taxon>
        <taxon>Metazoa</taxon>
        <taxon>Chordata</taxon>
        <taxon>Craniata</taxon>
        <taxon>Vertebrata</taxon>
        <taxon>Euteleostomi</taxon>
        <taxon>Mammalia</taxon>
        <taxon>Eutheria</taxon>
        <taxon>Euarchontoglires</taxon>
        <taxon>Glires</taxon>
        <taxon>Rodentia</taxon>
        <taxon>Myomorpha</taxon>
        <taxon>Muroidea</taxon>
        <taxon>Muridae</taxon>
        <taxon>Murinae</taxon>
        <taxon>Rattus</taxon>
    </lineage>
</organism>